<sequence length="105" mass="11761">MVKQIESKSAFQEVLDSAGDKLVVVDFSATWCGPCKMIKPFFHALSEKFNNVVFIEVDVDDCKDIAAECEVKCMPTFQFFKKGQKVGEFSGANKEKLEATINELL</sequence>
<keyword id="KW-0007">Acetylation</keyword>
<keyword id="KW-0010">Activator</keyword>
<keyword id="KW-0963">Cytoplasm</keyword>
<keyword id="KW-0903">Direct protein sequencing</keyword>
<keyword id="KW-1015">Disulfide bond</keyword>
<keyword id="KW-0249">Electron transport</keyword>
<keyword id="KW-0539">Nucleus</keyword>
<keyword id="KW-0676">Redox-active center</keyword>
<keyword id="KW-1185">Reference proteome</keyword>
<keyword id="KW-0702">S-nitrosylation</keyword>
<keyword id="KW-0964">Secreted</keyword>
<keyword id="KW-0804">Transcription</keyword>
<keyword id="KW-0805">Transcription regulation</keyword>
<keyword id="KW-0813">Transport</keyword>
<comment type="function">
    <text evidence="1">Participates in various redox reactions through the reversible oxidation of its active center dithiol to a disulfide and catalyzes dithiol-disulfide exchange reactions (By similarity). Plays a role in the reversible S-nitrosylation of cysteine residues in target proteins, and thereby contributes to the response to intracellular nitric oxide. Nitrosylates the active site Cys of CASP3 in response to nitric oxide (NO), and thereby inhibits caspase-3 activity. Induces the FOS/JUN AP-1 DNA binding activity in ionizing radiation (IR) cells through its oxidation/reduction status and stimulates AP-1 transcriptional activity (By similarity).</text>
</comment>
<comment type="subunit">
    <text evidence="1">Homodimer; disulfide-linked. Interacts with TXNIP through the redox-active site. Interacts with MAP3K5 and CASP3. Interacts with APEX1; the interaction stimulates the FOS/JUN AP-1 DNA-binding activity in a redox-dependent manner (By similarity).</text>
</comment>
<comment type="subcellular location">
    <subcellularLocation>
        <location evidence="2">Nucleus</location>
    </subcellularLocation>
    <subcellularLocation>
        <location evidence="2">Cytoplasm</location>
    </subcellularLocation>
    <subcellularLocation>
        <location evidence="2">Secreted</location>
    </subcellularLocation>
    <text evidence="2">Translocates from the cytoplasm into the nucleus after phorbol 12-myristate 13-acetate induction (PMA). Predominantly in the cytoplasm in non irradiated cells. Radiation induces translocation of TRX from the cytoplasm to the nucleus. Secreted by a leaderless secretory pathway.</text>
</comment>
<comment type="PTM">
    <text evidence="1">In the fully reduced protein, both Cys-69 and Cys-73 are nitrosylated in response to nitric oxide (NO). When two disulfide bonds are present in the protein, only Cys-73 is nitrosylated. Cys-73 can serve as donor for nitrosylation of target proteins (By similarity).</text>
</comment>
<comment type="similarity">
    <text evidence="6">Belongs to the thioredoxin family.</text>
</comment>
<organism>
    <name type="scientific">Oryctolagus cuniculus</name>
    <name type="common">Rabbit</name>
    <dbReference type="NCBI Taxonomy" id="9986"/>
    <lineage>
        <taxon>Eukaryota</taxon>
        <taxon>Metazoa</taxon>
        <taxon>Chordata</taxon>
        <taxon>Craniata</taxon>
        <taxon>Vertebrata</taxon>
        <taxon>Euteleostomi</taxon>
        <taxon>Mammalia</taxon>
        <taxon>Eutheria</taxon>
        <taxon>Euarchontoglires</taxon>
        <taxon>Glires</taxon>
        <taxon>Lagomorpha</taxon>
        <taxon>Leporidae</taxon>
        <taxon>Oryctolagus</taxon>
    </lineage>
</organism>
<protein>
    <recommendedName>
        <fullName>Thioredoxin</fullName>
        <shortName>Trx</shortName>
    </recommendedName>
</protein>
<evidence type="ECO:0000250" key="1"/>
<evidence type="ECO:0000250" key="2">
    <source>
        <dbReference type="UniProtKB" id="P10599"/>
    </source>
</evidence>
<evidence type="ECO:0000250" key="3">
    <source>
        <dbReference type="UniProtKB" id="P10639"/>
    </source>
</evidence>
<evidence type="ECO:0000255" key="4">
    <source>
        <dbReference type="PROSITE-ProRule" id="PRU00691"/>
    </source>
</evidence>
<evidence type="ECO:0000269" key="5">
    <source>
    </source>
</evidence>
<evidence type="ECO:0000305" key="6"/>
<accession>P08628</accession>
<proteinExistence type="evidence at protein level"/>
<dbReference type="PIR" id="A28086">
    <property type="entry name" value="A28086"/>
</dbReference>
<dbReference type="SMR" id="P08628"/>
<dbReference type="FunCoup" id="P08628">
    <property type="interactions" value="1152"/>
</dbReference>
<dbReference type="STRING" id="9986.ENSOCUP00000037757"/>
<dbReference type="PaxDb" id="9986-ENSOCUP00000003102"/>
<dbReference type="eggNOG" id="KOG0907">
    <property type="taxonomic scope" value="Eukaryota"/>
</dbReference>
<dbReference type="InParanoid" id="P08628"/>
<dbReference type="Proteomes" id="UP000001811">
    <property type="component" value="Unplaced"/>
</dbReference>
<dbReference type="GO" id="GO:0005737">
    <property type="term" value="C:cytoplasm"/>
    <property type="evidence" value="ECO:0007669"/>
    <property type="project" value="UniProtKB-SubCell"/>
</dbReference>
<dbReference type="GO" id="GO:0005576">
    <property type="term" value="C:extracellular region"/>
    <property type="evidence" value="ECO:0007669"/>
    <property type="project" value="UniProtKB-SubCell"/>
</dbReference>
<dbReference type="GO" id="GO:0005634">
    <property type="term" value="C:nucleus"/>
    <property type="evidence" value="ECO:0007669"/>
    <property type="project" value="UniProtKB-SubCell"/>
</dbReference>
<dbReference type="GO" id="GO:0015035">
    <property type="term" value="F:protein-disulfide reductase activity"/>
    <property type="evidence" value="ECO:0007669"/>
    <property type="project" value="InterPro"/>
</dbReference>
<dbReference type="GO" id="GO:0043388">
    <property type="term" value="P:positive regulation of DNA binding"/>
    <property type="evidence" value="ECO:0000250"/>
    <property type="project" value="UniProtKB"/>
</dbReference>
<dbReference type="GO" id="GO:0009314">
    <property type="term" value="P:response to radiation"/>
    <property type="evidence" value="ECO:0000250"/>
    <property type="project" value="UniProtKB"/>
</dbReference>
<dbReference type="CDD" id="cd02947">
    <property type="entry name" value="TRX_family"/>
    <property type="match status" value="1"/>
</dbReference>
<dbReference type="FunFam" id="3.40.30.10:FF:000130">
    <property type="entry name" value="Thioredoxin"/>
    <property type="match status" value="1"/>
</dbReference>
<dbReference type="Gene3D" id="3.40.30.10">
    <property type="entry name" value="Glutaredoxin"/>
    <property type="match status" value="1"/>
</dbReference>
<dbReference type="InterPro" id="IPR005746">
    <property type="entry name" value="Thioredoxin"/>
</dbReference>
<dbReference type="InterPro" id="IPR036249">
    <property type="entry name" value="Thioredoxin-like_sf"/>
</dbReference>
<dbReference type="InterPro" id="IPR017937">
    <property type="entry name" value="Thioredoxin_CS"/>
</dbReference>
<dbReference type="InterPro" id="IPR013766">
    <property type="entry name" value="Thioredoxin_domain"/>
</dbReference>
<dbReference type="PANTHER" id="PTHR46115">
    <property type="entry name" value="THIOREDOXIN-LIKE PROTEIN 1"/>
    <property type="match status" value="1"/>
</dbReference>
<dbReference type="Pfam" id="PF00085">
    <property type="entry name" value="Thioredoxin"/>
    <property type="match status" value="1"/>
</dbReference>
<dbReference type="PIRSF" id="PIRSF000077">
    <property type="entry name" value="Thioredoxin"/>
    <property type="match status" value="1"/>
</dbReference>
<dbReference type="PRINTS" id="PR00421">
    <property type="entry name" value="THIOREDOXIN"/>
</dbReference>
<dbReference type="SUPFAM" id="SSF52833">
    <property type="entry name" value="Thioredoxin-like"/>
    <property type="match status" value="1"/>
</dbReference>
<dbReference type="PROSITE" id="PS00194">
    <property type="entry name" value="THIOREDOXIN_1"/>
    <property type="match status" value="1"/>
</dbReference>
<dbReference type="PROSITE" id="PS51352">
    <property type="entry name" value="THIOREDOXIN_2"/>
    <property type="match status" value="1"/>
</dbReference>
<feature type="initiator methionine" description="Removed" evidence="5">
    <location>
        <position position="1"/>
    </location>
</feature>
<feature type="chain" id="PRO_0000120010" description="Thioredoxin">
    <location>
        <begin position="2"/>
        <end position="105"/>
    </location>
</feature>
<feature type="domain" description="Thioredoxin" evidence="4">
    <location>
        <begin position="2"/>
        <end position="105"/>
    </location>
</feature>
<feature type="active site" description="Nucleophile" evidence="1">
    <location>
        <position position="32"/>
    </location>
</feature>
<feature type="active site" description="Nucleophile" evidence="1">
    <location>
        <position position="35"/>
    </location>
</feature>
<feature type="site" description="Deprotonates C-terminal active site Cys" evidence="1">
    <location>
        <position position="26"/>
    </location>
</feature>
<feature type="site" description="Contributes to redox potential value" evidence="1">
    <location>
        <position position="33"/>
    </location>
</feature>
<feature type="site" description="Contributes to redox potential value" evidence="1">
    <location>
        <position position="34"/>
    </location>
</feature>
<feature type="modified residue" description="N6-acetyllysine" evidence="2">
    <location>
        <position position="3"/>
    </location>
</feature>
<feature type="modified residue" description="N6-succinyllysine" evidence="3">
    <location>
        <position position="8"/>
    </location>
</feature>
<feature type="modified residue" description="N6-acetyllysine" evidence="2">
    <location>
        <position position="39"/>
    </location>
</feature>
<feature type="modified residue" description="S-nitrosocysteine" evidence="2">
    <location>
        <position position="62"/>
    </location>
</feature>
<feature type="modified residue" description="S-nitrosocysteine" evidence="2">
    <location>
        <position position="69"/>
    </location>
</feature>
<feature type="modified residue" description="S-nitrosocysteine; alternate" evidence="2">
    <location>
        <position position="73"/>
    </location>
</feature>
<feature type="modified residue" description="N6-acetyllysine; alternate" evidence="3">
    <location>
        <position position="94"/>
    </location>
</feature>
<feature type="modified residue" description="N6-succinyllysine; alternate" evidence="3">
    <location>
        <position position="94"/>
    </location>
</feature>
<feature type="disulfide bond" description="Redox-active" evidence="4">
    <location>
        <begin position="32"/>
        <end position="35"/>
    </location>
</feature>
<feature type="disulfide bond" description="Interchain; alternate" evidence="1">
    <location>
        <position position="73"/>
    </location>
</feature>
<name>THIO_RABIT</name>
<gene>
    <name type="primary">TXN</name>
</gene>
<reference key="1">
    <citation type="journal article" date="1988" name="J. Biol. Chem.">
        <title>Amino acid sequence of thioredoxin isolated from rabbit bone marrow determined by tandem mass spectrometry.</title>
        <authorList>
            <person name="Johnson R.S."/>
            <person name="Mathews W.R."/>
            <person name="Biemann K."/>
            <person name="Hopper S."/>
        </authorList>
    </citation>
    <scope>PROTEIN SEQUENCE OF 2-105</scope>
    <scope>IDENTIFICATION BY MASS SPECTROMETRY</scope>
    <source>
        <tissue>Bone marrow</tissue>
    </source>
</reference>